<comment type="function">
    <text evidence="3">Odorant receptor.</text>
</comment>
<comment type="subcellular location">
    <subcellularLocation>
        <location>Cell membrane</location>
        <topology>Multi-pass membrane protein</topology>
    </subcellularLocation>
</comment>
<comment type="tissue specificity">
    <text>Olfactory epithelium.</text>
</comment>
<comment type="similarity">
    <text evidence="2">Belongs to the G-protein coupled receptor 1 family.</text>
</comment>
<sequence>MNNKTVITHFLLLGLPIPPEHQQLFFALFLIMYLTTFLGNLLIVVLVQLDSHLHTPMYLFLSNLSFSDLCFSSVTMLKLLQNIQSQVPSISYAGCLTQIFFFLLFGYLGNFLLVAMAYDRYVAICFPLHYTNIMSHKLCTCLLLVFWIMTSSHAMMHTLLAARLSFCENNVLLNFFCDLFVLLKLACSDTYVNELMIHIMGVIIIVIPFVLIVISYAKIISSILKVPSTQSIHKVFSTCGSHLSVVSLFYGTIIGLYLCPSGDNFSLKGSAMAMMYTVVTPMLNPFIYSLRNRDMKQALIRVTCSKKISLPW</sequence>
<organism>
    <name type="scientific">Rattus norvegicus</name>
    <name type="common">Rat</name>
    <dbReference type="NCBI Taxonomy" id="10116"/>
    <lineage>
        <taxon>Eukaryota</taxon>
        <taxon>Metazoa</taxon>
        <taxon>Chordata</taxon>
        <taxon>Craniata</taxon>
        <taxon>Vertebrata</taxon>
        <taxon>Euteleostomi</taxon>
        <taxon>Mammalia</taxon>
        <taxon>Eutheria</taxon>
        <taxon>Euarchontoglires</taxon>
        <taxon>Glires</taxon>
        <taxon>Rodentia</taxon>
        <taxon>Myomorpha</taxon>
        <taxon>Muroidea</taxon>
        <taxon>Muridae</taxon>
        <taxon>Murinae</taxon>
        <taxon>Rattus</taxon>
    </lineage>
</organism>
<name>O1493_RAT</name>
<accession>P23271</accession>
<protein>
    <recommendedName>
        <fullName>Olfactory receptor 1493</fullName>
    </recommendedName>
    <alternativeName>
        <fullName>Olfactory receptor-like protein I8</fullName>
    </alternativeName>
</protein>
<evidence type="ECO:0000255" key="1"/>
<evidence type="ECO:0000255" key="2">
    <source>
        <dbReference type="PROSITE-ProRule" id="PRU00521"/>
    </source>
</evidence>
<evidence type="ECO:0000305" key="3"/>
<dbReference type="EMBL" id="M64387">
    <property type="protein sequence ID" value="AAA41750.1"/>
    <property type="molecule type" value="mRNA"/>
</dbReference>
<dbReference type="PIR" id="G23701">
    <property type="entry name" value="G23701"/>
</dbReference>
<dbReference type="RefSeq" id="NP_001006610.1">
    <property type="nucleotide sequence ID" value="NM_001006609.1"/>
</dbReference>
<dbReference type="SMR" id="P23271"/>
<dbReference type="FunCoup" id="P23271">
    <property type="interactions" value="1004"/>
</dbReference>
<dbReference type="GlyCosmos" id="P23271">
    <property type="glycosylation" value="1 site, No reported glycans"/>
</dbReference>
<dbReference type="GlyGen" id="P23271">
    <property type="glycosylation" value="1 site"/>
</dbReference>
<dbReference type="GeneID" id="363640"/>
<dbReference type="KEGG" id="rno:363640"/>
<dbReference type="AGR" id="RGD:1549701"/>
<dbReference type="CTD" id="363640"/>
<dbReference type="RGD" id="1549701">
    <property type="gene designation" value="Olr1493"/>
</dbReference>
<dbReference type="InParanoid" id="P23271"/>
<dbReference type="OrthoDB" id="9975554at2759"/>
<dbReference type="PhylomeDB" id="P23271"/>
<dbReference type="PRO" id="PR:P23271"/>
<dbReference type="Proteomes" id="UP000002494">
    <property type="component" value="Unplaced"/>
</dbReference>
<dbReference type="GO" id="GO:0005886">
    <property type="term" value="C:plasma membrane"/>
    <property type="evidence" value="ECO:0000318"/>
    <property type="project" value="GO_Central"/>
</dbReference>
<dbReference type="GO" id="GO:0004930">
    <property type="term" value="F:G protein-coupled receptor activity"/>
    <property type="evidence" value="ECO:0007669"/>
    <property type="project" value="UniProtKB-KW"/>
</dbReference>
<dbReference type="GO" id="GO:0004984">
    <property type="term" value="F:olfactory receptor activity"/>
    <property type="evidence" value="ECO:0000318"/>
    <property type="project" value="GO_Central"/>
</dbReference>
<dbReference type="GO" id="GO:0007165">
    <property type="term" value="P:signal transduction"/>
    <property type="evidence" value="ECO:0000318"/>
    <property type="project" value="GO_Central"/>
</dbReference>
<dbReference type="FunFam" id="1.10.1220.70:FF:000001">
    <property type="entry name" value="Olfactory receptor"/>
    <property type="match status" value="1"/>
</dbReference>
<dbReference type="FunFam" id="1.20.1070.10:FF:000009">
    <property type="entry name" value="Olfactory receptor"/>
    <property type="match status" value="1"/>
</dbReference>
<dbReference type="Gene3D" id="1.20.1070.10">
    <property type="entry name" value="Rhodopsin 7-helix transmembrane proteins"/>
    <property type="match status" value="1"/>
</dbReference>
<dbReference type="InterPro" id="IPR000276">
    <property type="entry name" value="GPCR_Rhodpsn"/>
</dbReference>
<dbReference type="InterPro" id="IPR017452">
    <property type="entry name" value="GPCR_Rhodpsn_7TM"/>
</dbReference>
<dbReference type="InterPro" id="IPR000725">
    <property type="entry name" value="Olfact_rcpt"/>
</dbReference>
<dbReference type="PANTHER" id="PTHR48001">
    <property type="entry name" value="OLFACTORY RECEPTOR"/>
    <property type="match status" value="1"/>
</dbReference>
<dbReference type="Pfam" id="PF13853">
    <property type="entry name" value="7tm_4"/>
    <property type="match status" value="1"/>
</dbReference>
<dbReference type="PRINTS" id="PR00237">
    <property type="entry name" value="GPCRRHODOPSN"/>
</dbReference>
<dbReference type="PRINTS" id="PR00245">
    <property type="entry name" value="OLFACTORYR"/>
</dbReference>
<dbReference type="SUPFAM" id="SSF81321">
    <property type="entry name" value="Family A G protein-coupled receptor-like"/>
    <property type="match status" value="1"/>
</dbReference>
<dbReference type="PROSITE" id="PS00237">
    <property type="entry name" value="G_PROTEIN_RECEP_F1_1"/>
    <property type="match status" value="1"/>
</dbReference>
<dbReference type="PROSITE" id="PS50262">
    <property type="entry name" value="G_PROTEIN_RECEP_F1_2"/>
    <property type="match status" value="1"/>
</dbReference>
<reference key="1">
    <citation type="journal article" date="1991" name="Cell">
        <title>A novel multigene family may encode odorant receptors: a molecular basis for odor recognition.</title>
        <authorList>
            <person name="Buck L."/>
            <person name="Axel R."/>
        </authorList>
    </citation>
    <scope>NUCLEOTIDE SEQUENCE [MRNA]</scope>
</reference>
<keyword id="KW-1003">Cell membrane</keyword>
<keyword id="KW-1015">Disulfide bond</keyword>
<keyword id="KW-0297">G-protein coupled receptor</keyword>
<keyword id="KW-0325">Glycoprotein</keyword>
<keyword id="KW-0472">Membrane</keyword>
<keyword id="KW-0552">Olfaction</keyword>
<keyword id="KW-0675">Receptor</keyword>
<keyword id="KW-1185">Reference proteome</keyword>
<keyword id="KW-0716">Sensory transduction</keyword>
<keyword id="KW-0807">Transducer</keyword>
<keyword id="KW-0812">Transmembrane</keyword>
<keyword id="KW-1133">Transmembrane helix</keyword>
<proteinExistence type="evidence at transcript level"/>
<feature type="chain" id="PRO_0000150877" description="Olfactory receptor 1493">
    <location>
        <begin position="1"/>
        <end position="312"/>
    </location>
</feature>
<feature type="topological domain" description="Extracellular" evidence="1">
    <location>
        <begin position="1"/>
        <end position="23"/>
    </location>
</feature>
<feature type="transmembrane region" description="Helical; Name=1" evidence="1">
    <location>
        <begin position="24"/>
        <end position="48"/>
    </location>
</feature>
<feature type="topological domain" description="Cytoplasmic" evidence="1">
    <location>
        <begin position="49"/>
        <end position="55"/>
    </location>
</feature>
<feature type="transmembrane region" description="Helical; Name=2" evidence="1">
    <location>
        <begin position="56"/>
        <end position="77"/>
    </location>
</feature>
<feature type="topological domain" description="Extracellular" evidence="1">
    <location>
        <begin position="78"/>
        <end position="98"/>
    </location>
</feature>
<feature type="transmembrane region" description="Helical; Name=3" evidence="1">
    <location>
        <begin position="99"/>
        <end position="118"/>
    </location>
</feature>
<feature type="topological domain" description="Cytoplasmic" evidence="1">
    <location>
        <begin position="119"/>
        <end position="137"/>
    </location>
</feature>
<feature type="transmembrane region" description="Helical; Name=4" evidence="1">
    <location>
        <begin position="138"/>
        <end position="156"/>
    </location>
</feature>
<feature type="topological domain" description="Extracellular" evidence="1">
    <location>
        <begin position="157"/>
        <end position="194"/>
    </location>
</feature>
<feature type="transmembrane region" description="Helical; Name=5" evidence="1">
    <location>
        <begin position="195"/>
        <end position="217"/>
    </location>
</feature>
<feature type="topological domain" description="Cytoplasmic" evidence="1">
    <location>
        <begin position="218"/>
        <end position="234"/>
    </location>
</feature>
<feature type="transmembrane region" description="Helical; Name=6" evidence="1">
    <location>
        <begin position="235"/>
        <end position="258"/>
    </location>
</feature>
<feature type="topological domain" description="Extracellular" evidence="1">
    <location>
        <begin position="259"/>
        <end position="270"/>
    </location>
</feature>
<feature type="transmembrane region" description="Helical; Name=7" evidence="1">
    <location>
        <begin position="271"/>
        <end position="290"/>
    </location>
</feature>
<feature type="topological domain" description="Cytoplasmic" evidence="1">
    <location>
        <begin position="291"/>
        <end position="312"/>
    </location>
</feature>
<feature type="glycosylation site" description="N-linked (GlcNAc...) asparagine" evidence="1">
    <location>
        <position position="3"/>
    </location>
</feature>
<feature type="disulfide bond" evidence="2">
    <location>
        <begin position="95"/>
        <end position="187"/>
    </location>
</feature>
<gene>
    <name type="primary">Olr1493</name>
</gene>